<protein>
    <recommendedName>
        <fullName>Vacuolar transporter chaperone complex subunit 2</fullName>
    </recommendedName>
    <alternativeName>
        <fullName>SPX-dependent polyphosphate polymerase VTC subunit 2</fullName>
    </alternativeName>
    <alternativeName>
        <fullName>Vacuolar membrane polyphosphate polymerase accessory subunit 2</fullName>
        <shortName>PolyP polymerase</shortName>
    </alternativeName>
</protein>
<gene>
    <name type="primary">vtc2</name>
    <name type="ORF">SPAC14C4.11</name>
</gene>
<comment type="function">
    <text evidence="1">Accessory subunit of the vacuolar transporter chaperone (VTC) complex. The VTC complex acts as a vacuolar polyphosphate polymerase that catalyzes the synthesis of inorganic polyphosphate (polyP) via transfer of phosphate from ATP to a growing polyP chain, releasing ADP. VTC exposes its catalytic domain vtc4 to the cytosol, where the growing polyP chain winds through a tunnel-shaped pocket, integrating cytoplasmic polymer synthesis with polyP membrane translocation. The VTC complex carries 9 vacuolar transmembrane domains, which are likely to constitute the translocation channel into the organelle lumen. PolyP synthesis is tightly coupled to its transport into the vacuole lumen, in order to avoid otherwise toxic intermediates in the cytosol, and it depends on the proton gradient across the membrane, formed by V-ATPase. The VTC complex also plays a role in vacuolar membrane fusion.</text>
</comment>
<comment type="subunit">
    <text evidence="1">The VTC core complex is an integral membrane heterooligomer composed of at least the catalytic subunit vtc4 and the accessory subunits vtc1 and vtc2. vtc1 is a small membrane protein without hydrophilic domain. Vtc2 and vtc4 are related and have 2 hydrophilic domains that face the cytosol, an N-terminal SPX domain and the central core domain. The central core in vtc4 is the catalytic domain.</text>
</comment>
<comment type="subcellular location">
    <subcellularLocation>
        <location evidence="1">Vacuole membrane</location>
        <topology evidence="2">Multi-pass membrane protein</topology>
    </subcellularLocation>
</comment>
<comment type="domain">
    <text evidence="1">The SPX domain has very high affinity for inositol polyphosphates. SPX domains may integrate inositol pyrophosphates (PP-InsP)-dependent signaling to adapt cytosolic phosphate concentrations to different metabolic situations.</text>
</comment>
<comment type="similarity">
    <text evidence="5">Belongs to the VTC2/3 family.</text>
</comment>
<accession>O13718</accession>
<proteinExistence type="evidence at protein level"/>
<dbReference type="EMBL" id="CU329670">
    <property type="protein sequence ID" value="CAB11204.1"/>
    <property type="molecule type" value="Genomic_DNA"/>
</dbReference>
<dbReference type="PIR" id="T37696">
    <property type="entry name" value="T37696"/>
</dbReference>
<dbReference type="RefSeq" id="NP_594916.1">
    <property type="nucleotide sequence ID" value="NM_001020348.2"/>
</dbReference>
<dbReference type="SMR" id="O13718"/>
<dbReference type="BioGRID" id="277933">
    <property type="interactions" value="16"/>
</dbReference>
<dbReference type="FunCoup" id="O13718">
    <property type="interactions" value="12"/>
</dbReference>
<dbReference type="STRING" id="284812.O13718"/>
<dbReference type="iPTMnet" id="O13718"/>
<dbReference type="PaxDb" id="4896-SPAC14C4.11.1"/>
<dbReference type="EnsemblFungi" id="SPAC14C4.11.1">
    <property type="protein sequence ID" value="SPAC14C4.11.1:pep"/>
    <property type="gene ID" value="SPAC14C4.11"/>
</dbReference>
<dbReference type="GeneID" id="2541428"/>
<dbReference type="KEGG" id="spo:2541428"/>
<dbReference type="PomBase" id="SPAC14C4.11">
    <property type="gene designation" value="vtc2"/>
</dbReference>
<dbReference type="VEuPathDB" id="FungiDB:SPAC14C4.11"/>
<dbReference type="eggNOG" id="KOG1161">
    <property type="taxonomic scope" value="Eukaryota"/>
</dbReference>
<dbReference type="eggNOG" id="KOG4580">
    <property type="taxonomic scope" value="Eukaryota"/>
</dbReference>
<dbReference type="HOGENOM" id="CLU_009308_2_0_1"/>
<dbReference type="InParanoid" id="O13718"/>
<dbReference type="OMA" id="SFKFWVH"/>
<dbReference type="PhylomeDB" id="O13718"/>
<dbReference type="PRO" id="PR:O13718"/>
<dbReference type="Proteomes" id="UP000002485">
    <property type="component" value="Chromosome I"/>
</dbReference>
<dbReference type="GO" id="GO:0005783">
    <property type="term" value="C:endoplasmic reticulum"/>
    <property type="evidence" value="ECO:0000318"/>
    <property type="project" value="GO_Central"/>
</dbReference>
<dbReference type="GO" id="GO:0000329">
    <property type="term" value="C:fungal-type vacuole membrane"/>
    <property type="evidence" value="ECO:0000318"/>
    <property type="project" value="GO_Central"/>
</dbReference>
<dbReference type="GO" id="GO:0033254">
    <property type="term" value="C:vacuolar transporter chaperone complex"/>
    <property type="evidence" value="ECO:0000318"/>
    <property type="project" value="GO_Central"/>
</dbReference>
<dbReference type="GO" id="GO:0006112">
    <property type="term" value="P:energy reserve metabolic process"/>
    <property type="evidence" value="ECO:0000305"/>
    <property type="project" value="PomBase"/>
</dbReference>
<dbReference type="GO" id="GO:0006799">
    <property type="term" value="P:polyphosphate biosynthetic process"/>
    <property type="evidence" value="ECO:0000315"/>
    <property type="project" value="PomBase"/>
</dbReference>
<dbReference type="GO" id="GO:0180042">
    <property type="term" value="P:polyphosphate import into vacuole"/>
    <property type="evidence" value="ECO:0000305"/>
    <property type="project" value="PomBase"/>
</dbReference>
<dbReference type="GO" id="GO:0007034">
    <property type="term" value="P:vacuolar transport"/>
    <property type="evidence" value="ECO:0000266"/>
    <property type="project" value="PomBase"/>
</dbReference>
<dbReference type="CDD" id="cd07892">
    <property type="entry name" value="PolyPPase_VTC2-3_like"/>
    <property type="match status" value="1"/>
</dbReference>
<dbReference type="CDD" id="cd14480">
    <property type="entry name" value="SPX_VTC2_like"/>
    <property type="match status" value="1"/>
</dbReference>
<dbReference type="Gene3D" id="3.20.100.30">
    <property type="entry name" value="VTC, catalytic tunnel domain"/>
    <property type="match status" value="1"/>
</dbReference>
<dbReference type="InterPro" id="IPR003807">
    <property type="entry name" value="DUF202"/>
</dbReference>
<dbReference type="InterPro" id="IPR004331">
    <property type="entry name" value="SPX_dom"/>
</dbReference>
<dbReference type="InterPro" id="IPR051572">
    <property type="entry name" value="VTC_Complex_Subunit"/>
</dbReference>
<dbReference type="InterPro" id="IPR018966">
    <property type="entry name" value="VTC_domain"/>
</dbReference>
<dbReference type="InterPro" id="IPR042267">
    <property type="entry name" value="VTC_sf"/>
</dbReference>
<dbReference type="PANTHER" id="PTHR46140">
    <property type="entry name" value="VACUOLAR TRANSPORTER CHAPERONE 1-RELATED"/>
    <property type="match status" value="1"/>
</dbReference>
<dbReference type="PANTHER" id="PTHR46140:SF2">
    <property type="entry name" value="VACUOLAR TRANSPORTER CHAPERONE 3 COMPLEX SUBUNIT 3-RELATED"/>
    <property type="match status" value="1"/>
</dbReference>
<dbReference type="Pfam" id="PF02656">
    <property type="entry name" value="DUF202"/>
    <property type="match status" value="1"/>
</dbReference>
<dbReference type="Pfam" id="PF09359">
    <property type="entry name" value="VTC"/>
    <property type="match status" value="1"/>
</dbReference>
<dbReference type="PROSITE" id="PS51382">
    <property type="entry name" value="SPX"/>
    <property type="match status" value="1"/>
</dbReference>
<reference key="1">
    <citation type="journal article" date="2002" name="Nature">
        <title>The genome sequence of Schizosaccharomyces pombe.</title>
        <authorList>
            <person name="Wood V."/>
            <person name="Gwilliam R."/>
            <person name="Rajandream M.A."/>
            <person name="Lyne M.H."/>
            <person name="Lyne R."/>
            <person name="Stewart A."/>
            <person name="Sgouros J.G."/>
            <person name="Peat N."/>
            <person name="Hayles J."/>
            <person name="Baker S.G."/>
            <person name="Basham D."/>
            <person name="Bowman S."/>
            <person name="Brooks K."/>
            <person name="Brown D."/>
            <person name="Brown S."/>
            <person name="Chillingworth T."/>
            <person name="Churcher C.M."/>
            <person name="Collins M."/>
            <person name="Connor R."/>
            <person name="Cronin A."/>
            <person name="Davis P."/>
            <person name="Feltwell T."/>
            <person name="Fraser A."/>
            <person name="Gentles S."/>
            <person name="Goble A."/>
            <person name="Hamlin N."/>
            <person name="Harris D.E."/>
            <person name="Hidalgo J."/>
            <person name="Hodgson G."/>
            <person name="Holroyd S."/>
            <person name="Hornsby T."/>
            <person name="Howarth S."/>
            <person name="Huckle E.J."/>
            <person name="Hunt S."/>
            <person name="Jagels K."/>
            <person name="James K.D."/>
            <person name="Jones L."/>
            <person name="Jones M."/>
            <person name="Leather S."/>
            <person name="McDonald S."/>
            <person name="McLean J."/>
            <person name="Mooney P."/>
            <person name="Moule S."/>
            <person name="Mungall K.L."/>
            <person name="Murphy L.D."/>
            <person name="Niblett D."/>
            <person name="Odell C."/>
            <person name="Oliver K."/>
            <person name="O'Neil S."/>
            <person name="Pearson D."/>
            <person name="Quail M.A."/>
            <person name="Rabbinowitsch E."/>
            <person name="Rutherford K.M."/>
            <person name="Rutter S."/>
            <person name="Saunders D."/>
            <person name="Seeger K."/>
            <person name="Sharp S."/>
            <person name="Skelton J."/>
            <person name="Simmonds M.N."/>
            <person name="Squares R."/>
            <person name="Squares S."/>
            <person name="Stevens K."/>
            <person name="Taylor K."/>
            <person name="Taylor R.G."/>
            <person name="Tivey A."/>
            <person name="Walsh S.V."/>
            <person name="Warren T."/>
            <person name="Whitehead S."/>
            <person name="Woodward J.R."/>
            <person name="Volckaert G."/>
            <person name="Aert R."/>
            <person name="Robben J."/>
            <person name="Grymonprez B."/>
            <person name="Weltjens I."/>
            <person name="Vanstreels E."/>
            <person name="Rieger M."/>
            <person name="Schaefer M."/>
            <person name="Mueller-Auer S."/>
            <person name="Gabel C."/>
            <person name="Fuchs M."/>
            <person name="Duesterhoeft A."/>
            <person name="Fritzc C."/>
            <person name="Holzer E."/>
            <person name="Moestl D."/>
            <person name="Hilbert H."/>
            <person name="Borzym K."/>
            <person name="Langer I."/>
            <person name="Beck A."/>
            <person name="Lehrach H."/>
            <person name="Reinhardt R."/>
            <person name="Pohl T.M."/>
            <person name="Eger P."/>
            <person name="Zimmermann W."/>
            <person name="Wedler H."/>
            <person name="Wambutt R."/>
            <person name="Purnelle B."/>
            <person name="Goffeau A."/>
            <person name="Cadieu E."/>
            <person name="Dreano S."/>
            <person name="Gloux S."/>
            <person name="Lelaure V."/>
            <person name="Mottier S."/>
            <person name="Galibert F."/>
            <person name="Aves S.J."/>
            <person name="Xiang Z."/>
            <person name="Hunt C."/>
            <person name="Moore K."/>
            <person name="Hurst S.M."/>
            <person name="Lucas M."/>
            <person name="Rochet M."/>
            <person name="Gaillardin C."/>
            <person name="Tallada V.A."/>
            <person name="Garzon A."/>
            <person name="Thode G."/>
            <person name="Daga R.R."/>
            <person name="Cruzado L."/>
            <person name="Jimenez J."/>
            <person name="Sanchez M."/>
            <person name="del Rey F."/>
            <person name="Benito J."/>
            <person name="Dominguez A."/>
            <person name="Revuelta J.L."/>
            <person name="Moreno S."/>
            <person name="Armstrong J."/>
            <person name="Forsburg S.L."/>
            <person name="Cerutti L."/>
            <person name="Lowe T."/>
            <person name="McCombie W.R."/>
            <person name="Paulsen I."/>
            <person name="Potashkin J."/>
            <person name="Shpakovski G.V."/>
            <person name="Ussery D."/>
            <person name="Barrell B.G."/>
            <person name="Nurse P."/>
        </authorList>
    </citation>
    <scope>NUCLEOTIDE SEQUENCE [LARGE SCALE GENOMIC DNA]</scope>
    <source>
        <strain>972 / ATCC 24843</strain>
    </source>
</reference>
<reference key="2">
    <citation type="journal article" date="2008" name="J. Proteome Res.">
        <title>Phosphoproteome analysis of fission yeast.</title>
        <authorList>
            <person name="Wilson-Grady J.T."/>
            <person name="Villen J."/>
            <person name="Gygi S.P."/>
        </authorList>
    </citation>
    <scope>PHOSPHORYLATION [LARGE SCALE ANALYSIS] AT SER-181; THR-529 AND TYR-583</scope>
    <scope>IDENTIFICATION BY MASS SPECTROMETRY</scope>
</reference>
<evidence type="ECO:0000250" key="1">
    <source>
        <dbReference type="UniProtKB" id="P43585"/>
    </source>
</evidence>
<evidence type="ECO:0000255" key="2"/>
<evidence type="ECO:0000255" key="3">
    <source>
        <dbReference type="PROSITE-ProRule" id="PRU00714"/>
    </source>
</evidence>
<evidence type="ECO:0000269" key="4">
    <source>
    </source>
</evidence>
<evidence type="ECO:0000305" key="5"/>
<feature type="chain" id="PRO_0000116686" description="Vacuolar transporter chaperone complex subunit 2">
    <location>
        <begin position="1"/>
        <end position="734"/>
    </location>
</feature>
<feature type="topological domain" description="Cytoplasmic" evidence="1">
    <location>
        <begin position="1"/>
        <end position="624"/>
    </location>
</feature>
<feature type="transmembrane region" description="Helical" evidence="2">
    <location>
        <begin position="625"/>
        <end position="645"/>
    </location>
</feature>
<feature type="topological domain" description="Vacuolar" evidence="1">
    <location>
        <begin position="646"/>
        <end position="650"/>
    </location>
</feature>
<feature type="transmembrane region" description="Helical" evidence="2">
    <location>
        <begin position="651"/>
        <end position="671"/>
    </location>
</feature>
<feature type="topological domain" description="Cytoplasmic" evidence="1">
    <location>
        <begin position="672"/>
        <end position="693"/>
    </location>
</feature>
<feature type="transmembrane region" description="Helical" evidence="2">
    <location>
        <begin position="694"/>
        <end position="714"/>
    </location>
</feature>
<feature type="topological domain" description="Vacuolar" evidence="1">
    <location>
        <begin position="715"/>
        <end position="734"/>
    </location>
</feature>
<feature type="domain" description="SPX" evidence="3">
    <location>
        <begin position="1"/>
        <end position="144"/>
    </location>
</feature>
<feature type="region of interest" description="Important for inositol polyphosphate binding" evidence="1">
    <location>
        <begin position="125"/>
        <end position="132"/>
    </location>
</feature>
<feature type="site" description="Important for inositol polyphosphate binding" evidence="1">
    <location>
        <position position="22"/>
    </location>
</feature>
<feature type="site" description="Important for inositol polyphosphate binding" evidence="1">
    <location>
        <position position="26"/>
    </location>
</feature>
<feature type="modified residue" description="Phosphoserine" evidence="4">
    <location>
        <position position="181"/>
    </location>
</feature>
<feature type="modified residue" description="Phosphothreonine" evidence="4">
    <location>
        <position position="529"/>
    </location>
</feature>
<feature type="modified residue" description="Phosphotyrosine" evidence="4">
    <location>
        <position position="583"/>
    </location>
</feature>
<keyword id="KW-0143">Chaperone</keyword>
<keyword id="KW-0472">Membrane</keyword>
<keyword id="KW-0597">Phosphoprotein</keyword>
<keyword id="KW-1185">Reference proteome</keyword>
<keyword id="KW-0812">Transmembrane</keyword>
<keyword id="KW-1133">Transmembrane helix</keyword>
<keyword id="KW-0926">Vacuole</keyword>
<organism>
    <name type="scientific">Schizosaccharomyces pombe (strain 972 / ATCC 24843)</name>
    <name type="common">Fission yeast</name>
    <dbReference type="NCBI Taxonomy" id="284812"/>
    <lineage>
        <taxon>Eukaryota</taxon>
        <taxon>Fungi</taxon>
        <taxon>Dikarya</taxon>
        <taxon>Ascomycota</taxon>
        <taxon>Taphrinomycotina</taxon>
        <taxon>Schizosaccharomycetes</taxon>
        <taxon>Schizosaccharomycetales</taxon>
        <taxon>Schizosaccharomycetaceae</taxon>
        <taxon>Schizosaccharomyces</taxon>
    </lineage>
</organism>
<sequence length="734" mass="85445">MRFSDSIEAGIYEPWRDKYMNYPELKHLLKTEEEAPSWGENDESKFVSVMDAQLEKVYAFHLEILKELNESVDWVKSKVSASQEPDGPPISKEEAIKLLERLDSCTETVKKLEKYTRLNLTGFFKIVKKHDKLYPGYSLRPVFQVRLRACPLGSVQFNPLLAEIFSLYNTLRDGLSAPSNSVQVKPKHEHNVDYNSSMYRRRTFRFWVHPDNVMEVKTYIMRHLPVLYYSGKQGFDKDQNGVSGILDPISTCLYLDNSNFDLYSQNLERSEQAYSLRLHWYGKLTPKTDIIVERMVRQGSTLSHSEDRFTIREKKVRELLSGRYDFRKVEDDHSTTASDQKKKLIEDVEQLIVDNHLQPVLRSVYTRTAFQIPGDDEVRINLDSDWVMIREDSLDIERPCRDPEDWHRHDIDDADFPYKHLRKGEYSRFPYSVLEIRECVRYDEDEPLWISELRNSHLISEIDGFSKYEHGVAILFEKYVSLLPMWVFSMDQDIRKDLQEVYSHPEGSAGSRNVYIKRRNQRVLKQNMTPEPSQPSPLVNRLKANEMHPVSEEPEDNREVYRNEHGDHFNFRSIPGLLKPSTYGSFKHHGKTFVTPPHIKKPEIPLRVSGPIKVEAKVWLANERTFLKWLHVVVLLGSLALALYNSAGERLGQAFGVVYTLLAIFIGFYAWKLHAKRSQMIKSRSPAPMTDYWGPLIVGTALAISLIVNMSFALKDAVYQNLIEPDRLLVKLFT</sequence>
<name>VTC2_SCHPO</name>